<reference key="1">
    <citation type="journal article" date="1986" name="J. Biol. Chem.">
        <title>Cytoplasmic 3-hydroxy-3-methylglutaryl coenzyme A synthase from the hamster. I. Isolation and sequencing of a full-length cDNA.</title>
        <authorList>
            <person name="Gil G."/>
            <person name="Goldstein J.L."/>
            <person name="Slaughter C.A."/>
            <person name="Brown M.S."/>
        </authorList>
    </citation>
    <scope>NUCLEOTIDE SEQUENCE [GENOMIC DNA]</scope>
    <scope>SUBCELLULAR LOCATION</scope>
    <scope>CATALYTIC ACTIVITY</scope>
    <scope>FUNCTION</scope>
    <source>
        <tissue>Ovary</tissue>
    </source>
</reference>
<protein>
    <recommendedName>
        <fullName evidence="2">Hydroxymethylglutaryl-CoA synthase, cytoplasmic</fullName>
        <shortName evidence="2">HMG-CoA synthase</shortName>
        <ecNumber evidence="5">2.3.3.10</ecNumber>
    </recommendedName>
    <alternativeName>
        <fullName>3-hydroxy-3-methylglutaryl coenzyme A synthase</fullName>
    </alternativeName>
</protein>
<accession>P13704</accession>
<keyword id="KW-0007">Acetylation</keyword>
<keyword id="KW-0152">Cholesterol biosynthesis</keyword>
<keyword id="KW-0153">Cholesterol metabolism</keyword>
<keyword id="KW-0963">Cytoplasm</keyword>
<keyword id="KW-0444">Lipid biosynthesis</keyword>
<keyword id="KW-0443">Lipid metabolism</keyword>
<keyword id="KW-0597">Phosphoprotein</keyword>
<keyword id="KW-0752">Steroid biosynthesis</keyword>
<keyword id="KW-0753">Steroid metabolism</keyword>
<keyword id="KW-0756">Sterol biosynthesis</keyword>
<keyword id="KW-1207">Sterol metabolism</keyword>
<keyword id="KW-0808">Transferase</keyword>
<proteinExistence type="evidence at protein level"/>
<dbReference type="EC" id="2.3.3.10" evidence="5"/>
<dbReference type="EMBL" id="L00334">
    <property type="protein sequence ID" value="AAA37076.1"/>
    <property type="molecule type" value="Genomic_DNA"/>
</dbReference>
<dbReference type="EMBL" id="L00326">
    <property type="protein sequence ID" value="AAA37076.1"/>
    <property type="status" value="JOINED"/>
    <property type="molecule type" value="Genomic_DNA"/>
</dbReference>
<dbReference type="EMBL" id="L00327">
    <property type="protein sequence ID" value="AAA37076.1"/>
    <property type="status" value="JOINED"/>
    <property type="molecule type" value="Genomic_DNA"/>
</dbReference>
<dbReference type="EMBL" id="L00328">
    <property type="protein sequence ID" value="AAA37076.1"/>
    <property type="status" value="JOINED"/>
    <property type="molecule type" value="Genomic_DNA"/>
</dbReference>
<dbReference type="EMBL" id="L00329">
    <property type="protein sequence ID" value="AAA37076.1"/>
    <property type="status" value="JOINED"/>
    <property type="molecule type" value="Genomic_DNA"/>
</dbReference>
<dbReference type="EMBL" id="L00330">
    <property type="protein sequence ID" value="AAA37076.1"/>
    <property type="status" value="JOINED"/>
    <property type="molecule type" value="Genomic_DNA"/>
</dbReference>
<dbReference type="EMBL" id="L00331">
    <property type="protein sequence ID" value="AAA37076.1"/>
    <property type="status" value="JOINED"/>
    <property type="molecule type" value="Genomic_DNA"/>
</dbReference>
<dbReference type="EMBL" id="L00332">
    <property type="protein sequence ID" value="AAA37076.1"/>
    <property type="status" value="JOINED"/>
    <property type="molecule type" value="Genomic_DNA"/>
</dbReference>
<dbReference type="EMBL" id="L00333">
    <property type="protein sequence ID" value="AAA37076.1"/>
    <property type="status" value="JOINED"/>
    <property type="molecule type" value="Genomic_DNA"/>
</dbReference>
<dbReference type="PIR" id="A25332">
    <property type="entry name" value="A25332"/>
</dbReference>
<dbReference type="SMR" id="P13704"/>
<dbReference type="PaxDb" id="10029-XP_007632907.1"/>
<dbReference type="eggNOG" id="KOG1393">
    <property type="taxonomic scope" value="Eukaryota"/>
</dbReference>
<dbReference type="BRENDA" id="2.3.3.10">
    <property type="organism ID" value="1309"/>
</dbReference>
<dbReference type="UniPathway" id="UPA00058">
    <property type="reaction ID" value="UER00102"/>
</dbReference>
<dbReference type="Proteomes" id="UP000694386">
    <property type="component" value="Unplaced"/>
</dbReference>
<dbReference type="Proteomes" id="UP001108280">
    <property type="component" value="Unplaced"/>
</dbReference>
<dbReference type="GO" id="GO:0005737">
    <property type="term" value="C:cytoplasm"/>
    <property type="evidence" value="ECO:0007669"/>
    <property type="project" value="UniProtKB-SubCell"/>
</dbReference>
<dbReference type="GO" id="GO:0004421">
    <property type="term" value="F:hydroxymethylglutaryl-CoA synthase activity"/>
    <property type="evidence" value="ECO:0007669"/>
    <property type="project" value="UniProtKB-EC"/>
</dbReference>
<dbReference type="GO" id="GO:0042803">
    <property type="term" value="F:protein homodimerization activity"/>
    <property type="evidence" value="ECO:0000250"/>
    <property type="project" value="UniProtKB"/>
</dbReference>
<dbReference type="GO" id="GO:0006084">
    <property type="term" value="P:acetyl-CoA metabolic process"/>
    <property type="evidence" value="ECO:0007669"/>
    <property type="project" value="InterPro"/>
</dbReference>
<dbReference type="GO" id="GO:0006695">
    <property type="term" value="P:cholesterol biosynthetic process"/>
    <property type="evidence" value="ECO:0007669"/>
    <property type="project" value="UniProtKB-KW"/>
</dbReference>
<dbReference type="GO" id="GO:0010142">
    <property type="term" value="P:farnesyl diphosphate biosynthetic process, mevalonate pathway"/>
    <property type="evidence" value="ECO:0007669"/>
    <property type="project" value="InterPro"/>
</dbReference>
<dbReference type="CDD" id="cd00827">
    <property type="entry name" value="init_cond_enzymes"/>
    <property type="match status" value="1"/>
</dbReference>
<dbReference type="FunFam" id="3.40.47.10:FF:000008">
    <property type="entry name" value="3-hydroxy-3-methylglutaryl coenzyme A synthase"/>
    <property type="match status" value="1"/>
</dbReference>
<dbReference type="Gene3D" id="3.40.47.10">
    <property type="match status" value="1"/>
</dbReference>
<dbReference type="InterPro" id="IPR000590">
    <property type="entry name" value="HMG_CoA_synt_AS"/>
</dbReference>
<dbReference type="InterPro" id="IPR013746">
    <property type="entry name" value="HMG_CoA_synt_C_dom"/>
</dbReference>
<dbReference type="InterPro" id="IPR013528">
    <property type="entry name" value="HMG_CoA_synth_N"/>
</dbReference>
<dbReference type="InterPro" id="IPR010122">
    <property type="entry name" value="HMG_CoA_synthase_euk"/>
</dbReference>
<dbReference type="InterPro" id="IPR016039">
    <property type="entry name" value="Thiolase-like"/>
</dbReference>
<dbReference type="NCBIfam" id="TIGR01833">
    <property type="entry name" value="HMG-CoA-S_euk"/>
    <property type="match status" value="1"/>
</dbReference>
<dbReference type="PANTHER" id="PTHR43323">
    <property type="entry name" value="3-HYDROXY-3-METHYLGLUTARYL COENZYME A SYNTHASE"/>
    <property type="match status" value="1"/>
</dbReference>
<dbReference type="PANTHER" id="PTHR43323:SF4">
    <property type="entry name" value="HYDROXYMETHYLGLUTARYL-COA SYNTHASE, CYTOPLASMIC"/>
    <property type="match status" value="1"/>
</dbReference>
<dbReference type="Pfam" id="PF08540">
    <property type="entry name" value="HMG_CoA_synt_C"/>
    <property type="match status" value="1"/>
</dbReference>
<dbReference type="Pfam" id="PF01154">
    <property type="entry name" value="HMG_CoA_synt_N"/>
    <property type="match status" value="1"/>
</dbReference>
<dbReference type="SUPFAM" id="SSF53901">
    <property type="entry name" value="Thiolase-like"/>
    <property type="match status" value="2"/>
</dbReference>
<dbReference type="PROSITE" id="PS01226">
    <property type="entry name" value="HMG_COA_SYNTHASE"/>
    <property type="match status" value="1"/>
</dbReference>
<name>HMCS1_CRIGR</name>
<sequence length="520" mass="57318">MPGSLPLNAEACWPKDVGIVALEIYFPSQYVDQAELEKYDGVDAGKYTIGLGQARMGFCTDREDINSLCLTVVQNLMERNSLSYDCIGRLEVGTETIIDKSKSVKSNLMQLFEESGNTDIEGIDTTNACYGGTAAVFNAVNWIESSSWDGRYALVVAGDIAIYATGNARPTGGVGAVALLIGPNAPLIFDRGLRGTHMQHAYDFYKPDMLSEYPIVDGKLSIQCYLSALDRCYSVYRKKIRAQWQKEGNDNDFTLNDFGFMISHSPYCKLVQKSLARMFLNDFLNDQNRDKNSIYSGLEAFGDVKLEDTYFDRDVEKAFMKASSELFNQKTKASLLVSNQNGNMYTSSVYGSLASVLAQYSPQQLAGKRIGVFSYGSGLAATLYSLKVTQDATPGSALDKVTASLCDLKSRLDSRTCVAPDVFAENMKLREDTHHLANYIPQCSIDSLFEGTWYLVRVDEKHRRTYARRPSTNDHNLGDGVGLVHSNTATEHIPSPAKKVPRLPATAAESESAVISNGEH</sequence>
<organism>
    <name type="scientific">Cricetulus griseus</name>
    <name type="common">Chinese hamster</name>
    <name type="synonym">Cricetulus barabensis griseus</name>
    <dbReference type="NCBI Taxonomy" id="10029"/>
    <lineage>
        <taxon>Eukaryota</taxon>
        <taxon>Metazoa</taxon>
        <taxon>Chordata</taxon>
        <taxon>Craniata</taxon>
        <taxon>Vertebrata</taxon>
        <taxon>Euteleostomi</taxon>
        <taxon>Mammalia</taxon>
        <taxon>Eutheria</taxon>
        <taxon>Euarchontoglires</taxon>
        <taxon>Glires</taxon>
        <taxon>Rodentia</taxon>
        <taxon>Myomorpha</taxon>
        <taxon>Muroidea</taxon>
        <taxon>Cricetidae</taxon>
        <taxon>Cricetinae</taxon>
        <taxon>Cricetulus</taxon>
    </lineage>
</organism>
<feature type="chain" id="PRO_0000213746" description="Hydroxymethylglutaryl-CoA synthase, cytoplasmic">
    <location>
        <begin position="1"/>
        <end position="520"/>
    </location>
</feature>
<feature type="region of interest" description="Disordered" evidence="4">
    <location>
        <begin position="486"/>
        <end position="520"/>
    </location>
</feature>
<feature type="active site" description="Proton donor/acceptor" evidence="3">
    <location>
        <position position="95"/>
    </location>
</feature>
<feature type="active site" description="Acyl-thioester intermediate" evidence="3">
    <location>
        <position position="129"/>
    </location>
</feature>
<feature type="active site" description="Proton donor/acceptor" evidence="3">
    <location>
        <position position="264"/>
    </location>
</feature>
<feature type="binding site" evidence="1">
    <location>
        <position position="43"/>
    </location>
    <ligand>
        <name>(3S)-3-hydroxy-3-methylglutaryl-CoA</name>
        <dbReference type="ChEBI" id="CHEBI:43074"/>
    </ligand>
</feature>
<feature type="binding site" evidence="2">
    <location>
        <begin position="44"/>
        <end position="46"/>
    </location>
    <ligand>
        <name>CoA</name>
        <dbReference type="ChEBI" id="CHEBI:57287"/>
    </ligand>
</feature>
<feature type="binding site" evidence="1">
    <location>
        <position position="44"/>
    </location>
    <ligand>
        <name>(3S)-3-hydroxy-3-methylglutaryl-CoA</name>
        <dbReference type="ChEBI" id="CHEBI:43074"/>
    </ligand>
</feature>
<feature type="binding site" evidence="1">
    <location>
        <position position="129"/>
    </location>
    <ligand>
        <name>(3S)-3-hydroxy-3-methylglutaryl-CoA</name>
        <dbReference type="ChEBI" id="CHEBI:43074"/>
    </ligand>
</feature>
<feature type="binding site" evidence="1">
    <location>
        <position position="167"/>
    </location>
    <ligand>
        <name>(3S)-3-hydroxy-3-methylglutaryl-CoA</name>
        <dbReference type="ChEBI" id="CHEBI:43074"/>
    </ligand>
</feature>
<feature type="binding site" evidence="2">
    <location>
        <position position="167"/>
    </location>
    <ligand>
        <name>CoA</name>
        <dbReference type="ChEBI" id="CHEBI:57287"/>
    </ligand>
</feature>
<feature type="binding site" evidence="1">
    <location>
        <position position="171"/>
    </location>
    <ligand>
        <name>(3S)-3-hydroxy-3-methylglutaryl-CoA</name>
        <dbReference type="ChEBI" id="CHEBI:43074"/>
    </ligand>
</feature>
<feature type="binding site" evidence="1">
    <location>
        <position position="221"/>
    </location>
    <ligand>
        <name>(3S)-3-hydroxy-3-methylglutaryl-CoA</name>
        <dbReference type="ChEBI" id="CHEBI:43074"/>
    </ligand>
</feature>
<feature type="binding site" evidence="2">
    <location>
        <position position="221"/>
    </location>
    <ligand>
        <name>CoA</name>
        <dbReference type="ChEBI" id="CHEBI:57287"/>
    </ligand>
</feature>
<feature type="binding site" evidence="1">
    <location>
        <position position="264"/>
    </location>
    <ligand>
        <name>(3S)-3-hydroxy-3-methylglutaryl-CoA</name>
        <dbReference type="ChEBI" id="CHEBI:43074"/>
    </ligand>
</feature>
<feature type="binding site" evidence="2">
    <location>
        <position position="269"/>
    </location>
    <ligand>
        <name>CoA</name>
        <dbReference type="ChEBI" id="CHEBI:57287"/>
    </ligand>
</feature>
<feature type="binding site" evidence="1">
    <location>
        <position position="273"/>
    </location>
    <ligand>
        <name>(3S)-3-hydroxy-3-methylglutaryl-CoA</name>
        <dbReference type="ChEBI" id="CHEBI:43074"/>
    </ligand>
</feature>
<feature type="binding site" evidence="2">
    <location>
        <position position="273"/>
    </location>
    <ligand>
        <name>CoA</name>
        <dbReference type="ChEBI" id="CHEBI:57287"/>
    </ligand>
</feature>
<feature type="binding site" evidence="1">
    <location>
        <position position="343"/>
    </location>
    <ligand>
        <name>(3S)-3-hydroxy-3-methylglutaryl-CoA</name>
        <dbReference type="ChEBI" id="CHEBI:43074"/>
    </ligand>
</feature>
<feature type="binding site" evidence="1">
    <location>
        <position position="377"/>
    </location>
    <ligand>
        <name>(3S)-3-hydroxy-3-methylglutaryl-CoA</name>
        <dbReference type="ChEBI" id="CHEBI:43074"/>
    </ligand>
</feature>
<feature type="modified residue" description="Phosphoserine" evidence="2">
    <location>
        <position position="4"/>
    </location>
</feature>
<feature type="modified residue" description="N6-acetyllysine" evidence="2">
    <location>
        <position position="46"/>
    </location>
</feature>
<feature type="modified residue" description="N6-acetyllysine" evidence="2">
    <location>
        <position position="273"/>
    </location>
</feature>
<feature type="modified residue" description="Phosphoserine" evidence="2">
    <location>
        <position position="495"/>
    </location>
</feature>
<feature type="modified residue" description="Phosphoserine" evidence="2">
    <location>
        <position position="516"/>
    </location>
</feature>
<gene>
    <name evidence="2" type="primary">HMGCS1</name>
    <name type="synonym">HMGCS</name>
</gene>
<evidence type="ECO:0000250" key="1">
    <source>
        <dbReference type="UniProtKB" id="P54868"/>
    </source>
</evidence>
<evidence type="ECO:0000250" key="2">
    <source>
        <dbReference type="UniProtKB" id="Q01581"/>
    </source>
</evidence>
<evidence type="ECO:0000255" key="3">
    <source>
        <dbReference type="PROSITE-ProRule" id="PRU10116"/>
    </source>
</evidence>
<evidence type="ECO:0000256" key="4">
    <source>
        <dbReference type="SAM" id="MobiDB-lite"/>
    </source>
</evidence>
<evidence type="ECO:0000269" key="5">
    <source>
    </source>
</evidence>
<evidence type="ECO:0000305" key="6"/>
<evidence type="ECO:0000305" key="7">
    <source>
    </source>
</evidence>
<comment type="function">
    <text evidence="5">This enzyme condenses acetyl-CoA with acetoacetyl-CoA to form HMG-CoA, which is converted by HMG-CoA reductase (HMGCR) into mevalonate, a precursor for cholesterol synthesis.</text>
</comment>
<comment type="catalytic activity">
    <reaction evidence="5">
        <text>acetoacetyl-CoA + acetyl-CoA + H2O = (3S)-3-hydroxy-3-methylglutaryl-CoA + CoA + H(+)</text>
        <dbReference type="Rhea" id="RHEA:10188"/>
        <dbReference type="ChEBI" id="CHEBI:15377"/>
        <dbReference type="ChEBI" id="CHEBI:15378"/>
        <dbReference type="ChEBI" id="CHEBI:43074"/>
        <dbReference type="ChEBI" id="CHEBI:57286"/>
        <dbReference type="ChEBI" id="CHEBI:57287"/>
        <dbReference type="ChEBI" id="CHEBI:57288"/>
        <dbReference type="EC" id="2.3.3.10"/>
    </reaction>
    <physiologicalReaction direction="left-to-right" evidence="7">
        <dbReference type="Rhea" id="RHEA:10189"/>
    </physiologicalReaction>
</comment>
<comment type="pathway">
    <text>Metabolic intermediate biosynthesis; (R)-mevalonate biosynthesis; (R)-mevalonate from acetyl-CoA: step 2/3.</text>
</comment>
<comment type="subunit">
    <text evidence="2">Homodimer.</text>
</comment>
<comment type="subcellular location">
    <subcellularLocation>
        <location evidence="5">Cytoplasm</location>
    </subcellularLocation>
</comment>
<comment type="similarity">
    <text evidence="6">Belongs to the thiolase-like superfamily. HMG-CoA synthase family.</text>
</comment>